<gene>
    <name evidence="6" type="primary">CX3CR1</name>
</gene>
<comment type="function">
    <text evidence="2 3">Receptor for the C-X3-C chemokine fractalkine (CX3CL1) present on many early leukocyte cells; CX3CR1-CX3CL1 signaling exerts distinct functions in different tissue compartments, such as immune response, inflammation, cell adhesion and chemotaxis. CX3CR1-CX3CL1 signaling mediates cell migratory functions. Responsible for the recruitment of natural killer (NK) cells to inflamed tissues. Acts as a regulator of inflammation process leading to atherogenesis by mediating macrophage and monocyte recruitment to inflamed atherosclerotic plaques, promoting cell survival. Involved in airway inflammation by promoting interleukin 2-producing T helper (Th2) cell survival in inflamed lung. Involved in the migration of circulating monocytes to non-inflamed tissues, where they differentiate into macrophages and dendritic cells. Acts as a negative regulator of angiogenesis, probably by promoting macrophage chemotaxis. Plays a key role in brain microglia by regulating inflammatory response in the central nervous system (CNS) and regulating synapse maturation. Required to restrain the microglial inflammatory response in the CNS and the resulting parenchymal damage in response to pathological stimuli. Involved in brain development by participating in synaptic pruning, a natural process during which brain microglia eliminates extra synapses during postnatal development. Synaptic pruning by microglia is required to promote the maturation of circuit connectivity during brain development. Acts as an important regulator of the gut microbiota by controlling immunity to intestinal bacteria and fungi. Expressed in lamina propria dendritic cells in the small intestine, which form transepithelial dendrites capable of taking up bacteria in order to provide defense against pathogenic bacteria. Required to initiate innate and adaptive immune responses against dissemination of commensal fungi (mycobiota) component of the gut: expressed in mononuclear phagocytes (MNPs) and acts by promoting induction of antifungal IgG antibodies response to confer protection against disseminated C.albicans or C.auris infection (By similarity). Also acts as a receptor for C-C motif chemokine CCL26, inducing cell chemotaxis (By similarity).</text>
</comment>
<comment type="subunit">
    <text evidence="2">Found in a ternary complex with CX3CL1 and ITGAV:ITGB3 or ITGA4:ITGB1.</text>
</comment>
<comment type="subcellular location">
    <subcellularLocation>
        <location evidence="2">Cell membrane</location>
        <topology evidence="4">Multi-pass membrane protein</topology>
    </subcellularLocation>
</comment>
<comment type="PTM">
    <text evidence="1">This protein is not N-glycosylated which is unusual for G-protein-coupled receptors.</text>
</comment>
<comment type="similarity">
    <text evidence="5">Belongs to the G-protein coupled receptor 1 family.</text>
</comment>
<evidence type="ECO:0000250" key="1">
    <source>
        <dbReference type="UniProtKB" id="P35411"/>
    </source>
</evidence>
<evidence type="ECO:0000250" key="2">
    <source>
        <dbReference type="UniProtKB" id="P49238"/>
    </source>
</evidence>
<evidence type="ECO:0000250" key="3">
    <source>
        <dbReference type="UniProtKB" id="Q9Z0D9"/>
    </source>
</evidence>
<evidence type="ECO:0000255" key="4"/>
<evidence type="ECO:0000255" key="5">
    <source>
        <dbReference type="PROSITE-ProRule" id="PRU00521"/>
    </source>
</evidence>
<evidence type="ECO:0000303" key="6">
    <source ref="1"/>
</evidence>
<proteinExistence type="evidence at transcript level"/>
<feature type="chain" id="PRO_0000375806" description="CX3C chemokine receptor 1">
    <location>
        <begin position="1"/>
        <end position="356"/>
    </location>
</feature>
<feature type="topological domain" description="Extracellular" evidence="4">
    <location>
        <begin position="1"/>
        <end position="26"/>
    </location>
</feature>
<feature type="transmembrane region" description="Helical; Name=1" evidence="4">
    <location>
        <begin position="27"/>
        <end position="47"/>
    </location>
</feature>
<feature type="topological domain" description="Cytoplasmic" evidence="4">
    <location>
        <begin position="48"/>
        <end position="68"/>
    </location>
</feature>
<feature type="transmembrane region" description="Helical; Name=2" evidence="4">
    <location>
        <begin position="69"/>
        <end position="89"/>
    </location>
</feature>
<feature type="topological domain" description="Extracellular" evidence="4">
    <location>
        <begin position="90"/>
        <end position="105"/>
    </location>
</feature>
<feature type="transmembrane region" description="Helical; Name=3" evidence="4">
    <location>
        <begin position="106"/>
        <end position="126"/>
    </location>
</feature>
<feature type="topological domain" description="Cytoplasmic" evidence="4">
    <location>
        <begin position="127"/>
        <end position="147"/>
    </location>
</feature>
<feature type="transmembrane region" description="Helical; Name=4" evidence="4">
    <location>
        <begin position="148"/>
        <end position="168"/>
    </location>
</feature>
<feature type="topological domain" description="Extracellular" evidence="4">
    <location>
        <begin position="169"/>
        <end position="195"/>
    </location>
</feature>
<feature type="transmembrane region" description="Helical; Name=5" evidence="4">
    <location>
        <begin position="196"/>
        <end position="216"/>
    </location>
</feature>
<feature type="topological domain" description="Cytoplasmic" evidence="4">
    <location>
        <begin position="217"/>
        <end position="232"/>
    </location>
</feature>
<feature type="transmembrane region" description="Helical; Name=6" evidence="4">
    <location>
        <begin position="233"/>
        <end position="253"/>
    </location>
</feature>
<feature type="topological domain" description="Extracellular" evidence="4">
    <location>
        <begin position="254"/>
        <end position="277"/>
    </location>
</feature>
<feature type="transmembrane region" description="Helical; Name=7" evidence="4">
    <location>
        <begin position="278"/>
        <end position="298"/>
    </location>
</feature>
<feature type="topological domain" description="Cytoplasmic" evidence="4">
    <location>
        <begin position="299"/>
        <end position="356"/>
    </location>
</feature>
<feature type="modified residue" description="Phosphothreonine" evidence="3">
    <location>
        <position position="347"/>
    </location>
</feature>
<feature type="disulfide bond" evidence="5">
    <location>
        <begin position="103"/>
        <end position="176"/>
    </location>
</feature>
<reference key="1">
    <citation type="submission" date="2006-01" db="EMBL/GenBank/DDBJ databases">
        <title>Rabbit CX3C chemokine receptor 1 (CX3CR1_RABBIT), complete cDNA.</title>
        <authorList>
            <person name="Karlsson-Svalstedt B."/>
            <person name="Drmota T."/>
        </authorList>
    </citation>
    <scope>NUCLEOTIDE SEQUENCE [MRNA]</scope>
</reference>
<keyword id="KW-1064">Adaptive immunity</keyword>
<keyword id="KW-1003">Cell membrane</keyword>
<keyword id="KW-1015">Disulfide bond</keyword>
<keyword id="KW-0297">G-protein coupled receptor</keyword>
<keyword id="KW-0391">Immunity</keyword>
<keyword id="KW-0395">Inflammatory response</keyword>
<keyword id="KW-0399">Innate immunity</keyword>
<keyword id="KW-0472">Membrane</keyword>
<keyword id="KW-0597">Phosphoprotein</keyword>
<keyword id="KW-0675">Receptor</keyword>
<keyword id="KW-1185">Reference proteome</keyword>
<keyword id="KW-0807">Transducer</keyword>
<keyword id="KW-0812">Transmembrane</keyword>
<keyword id="KW-1133">Transmembrane helix</keyword>
<protein>
    <recommendedName>
        <fullName evidence="6">CX3C chemokine receptor 1</fullName>
        <shortName evidence="6">C-X3-C CKR-1</shortName>
        <shortName evidence="6">CX3CR1</shortName>
    </recommendedName>
    <alternativeName>
        <fullName evidence="2">Fractalkine receptor</fullName>
    </alternativeName>
</protein>
<sequence>MTTLYSDWATESFEYDESSEACFIGDIVAFGTIFLSIFYSLVFAFGLVGNLLVVCALTSSRKPKSITDIYLLNLALSDLLFVATLPFWTHYVISEQGFHNAVCKLTTALFFIGFFGGIFFITVISIDRYMAIVLAANSINNRTVQHGVTTSLGVWAAAILVAAPQFMFTKQKGNECLGDYPEVLQDIWPVLRNTEANFLGFLLPVLIMSYCYFRIIQTLFSCKNHKKAKAIKLILLVVIVFFLFWTPYNVMIFLETLKLYGFFPNCDMKRDLRLALSVTETVAFSHCCLNPLIYAFAGQKFRRYLRHLSRKCQAVLCGRPVHVSFSPSESQRSRQESIVSSNFTHYTSDGDASLLL</sequence>
<accession>Q2KTE1</accession>
<dbReference type="EMBL" id="AM183335">
    <property type="protein sequence ID" value="CAJ66583.1"/>
    <property type="molecule type" value="mRNA"/>
</dbReference>
<dbReference type="RefSeq" id="NP_001075603.1">
    <property type="nucleotide sequence ID" value="NM_001082134.1"/>
</dbReference>
<dbReference type="RefSeq" id="XP_008258422.1">
    <property type="nucleotide sequence ID" value="XM_008260200.1"/>
</dbReference>
<dbReference type="SMR" id="Q2KTE1"/>
<dbReference type="FunCoup" id="Q2KTE1">
    <property type="interactions" value="45"/>
</dbReference>
<dbReference type="STRING" id="9986.ENSOCUP00000024608"/>
<dbReference type="PaxDb" id="9986-ENSOCUP00000024608"/>
<dbReference type="Ensembl" id="ENSOCUT00000028713.2">
    <property type="protein sequence ID" value="ENSOCUP00000024608.2"/>
    <property type="gene ID" value="ENSOCUG00000027509.2"/>
</dbReference>
<dbReference type="GeneID" id="100008874"/>
<dbReference type="KEGG" id="ocu:100008874"/>
<dbReference type="CTD" id="1524"/>
<dbReference type="eggNOG" id="ENOG502QVQK">
    <property type="taxonomic scope" value="Eukaryota"/>
</dbReference>
<dbReference type="GeneTree" id="ENSGT01020000230359"/>
<dbReference type="InParanoid" id="Q2KTE1"/>
<dbReference type="OrthoDB" id="5981253at2759"/>
<dbReference type="Proteomes" id="UP000001811">
    <property type="component" value="Chromosome 9"/>
</dbReference>
<dbReference type="Bgee" id="ENSOCUG00000027509">
    <property type="expression patterns" value="Expressed in brain and 17 other cell types or tissues"/>
</dbReference>
<dbReference type="ExpressionAtlas" id="Q2KTE1">
    <property type="expression patterns" value="baseline"/>
</dbReference>
<dbReference type="GO" id="GO:0009897">
    <property type="term" value="C:external side of plasma membrane"/>
    <property type="evidence" value="ECO:0007669"/>
    <property type="project" value="TreeGrafter"/>
</dbReference>
<dbReference type="GO" id="GO:0019957">
    <property type="term" value="F:C-C chemokine binding"/>
    <property type="evidence" value="ECO:0007669"/>
    <property type="project" value="TreeGrafter"/>
</dbReference>
<dbReference type="GO" id="GO:0016493">
    <property type="term" value="F:C-C chemokine receptor activity"/>
    <property type="evidence" value="ECO:0007669"/>
    <property type="project" value="TreeGrafter"/>
</dbReference>
<dbReference type="GO" id="GO:0019960">
    <property type="term" value="F:C-X3-C chemokine binding"/>
    <property type="evidence" value="ECO:0000250"/>
    <property type="project" value="UniProtKB"/>
</dbReference>
<dbReference type="GO" id="GO:0016495">
    <property type="term" value="F:C-X3-C chemokine receptor activity"/>
    <property type="evidence" value="ECO:0007669"/>
    <property type="project" value="Ensembl"/>
</dbReference>
<dbReference type="GO" id="GO:0031737">
    <property type="term" value="F:CX3C chemokine receptor binding"/>
    <property type="evidence" value="ECO:0007669"/>
    <property type="project" value="Ensembl"/>
</dbReference>
<dbReference type="GO" id="GO:0002250">
    <property type="term" value="P:adaptive immune response"/>
    <property type="evidence" value="ECO:0000250"/>
    <property type="project" value="UniProtKB"/>
</dbReference>
<dbReference type="GO" id="GO:0061760">
    <property type="term" value="P:antifungal innate immune response"/>
    <property type="evidence" value="ECO:0000250"/>
    <property type="project" value="UniProtKB"/>
</dbReference>
<dbReference type="GO" id="GO:0007420">
    <property type="term" value="P:brain development"/>
    <property type="evidence" value="ECO:0000250"/>
    <property type="project" value="UniProtKB"/>
</dbReference>
<dbReference type="GO" id="GO:0019722">
    <property type="term" value="P:calcium-mediated signaling"/>
    <property type="evidence" value="ECO:0007669"/>
    <property type="project" value="TreeGrafter"/>
</dbReference>
<dbReference type="GO" id="GO:0071222">
    <property type="term" value="P:cellular response to lipopolysaccharide"/>
    <property type="evidence" value="ECO:0007669"/>
    <property type="project" value="Ensembl"/>
</dbReference>
<dbReference type="GO" id="GO:0021626">
    <property type="term" value="P:central nervous system maturation"/>
    <property type="evidence" value="ECO:0007669"/>
    <property type="project" value="Ensembl"/>
</dbReference>
<dbReference type="GO" id="GO:0048874">
    <property type="term" value="P:host-mediated regulation of intestinal microbiota composition"/>
    <property type="evidence" value="ECO:0000250"/>
    <property type="project" value="UniProtKB"/>
</dbReference>
<dbReference type="GO" id="GO:0006955">
    <property type="term" value="P:immune response"/>
    <property type="evidence" value="ECO:0000250"/>
    <property type="project" value="UniProtKB"/>
</dbReference>
<dbReference type="GO" id="GO:0030595">
    <property type="term" value="P:leukocyte chemotaxis"/>
    <property type="evidence" value="ECO:0000250"/>
    <property type="project" value="UniProtKB"/>
</dbReference>
<dbReference type="GO" id="GO:0050901">
    <property type="term" value="P:leukocyte tethering or rolling"/>
    <property type="evidence" value="ECO:0007669"/>
    <property type="project" value="Ensembl"/>
</dbReference>
<dbReference type="GO" id="GO:0002282">
    <property type="term" value="P:microglial cell activation involved in immune response"/>
    <property type="evidence" value="ECO:0000250"/>
    <property type="project" value="UniProtKB"/>
</dbReference>
<dbReference type="GO" id="GO:0050804">
    <property type="term" value="P:modulation of chemical synaptic transmission"/>
    <property type="evidence" value="ECO:0007669"/>
    <property type="project" value="Ensembl"/>
</dbReference>
<dbReference type="GO" id="GO:0150090">
    <property type="term" value="P:multiple spine synapse organization, single dendrite"/>
    <property type="evidence" value="ECO:0007669"/>
    <property type="project" value="Ensembl"/>
</dbReference>
<dbReference type="GO" id="GO:0016525">
    <property type="term" value="P:negative regulation of angiogenesis"/>
    <property type="evidence" value="ECO:0007669"/>
    <property type="project" value="Ensembl"/>
</dbReference>
<dbReference type="GO" id="GO:1904150">
    <property type="term" value="P:negative regulation of microglial cell mediated cytotoxicity"/>
    <property type="evidence" value="ECO:0000250"/>
    <property type="project" value="UniProtKB"/>
</dbReference>
<dbReference type="GO" id="GO:0007200">
    <property type="term" value="P:phospholipase C-activating G protein-coupled receptor signaling pathway"/>
    <property type="evidence" value="ECO:0007669"/>
    <property type="project" value="Ensembl"/>
</dbReference>
<dbReference type="GO" id="GO:0007204">
    <property type="term" value="P:positive regulation of cytosolic calcium ion concentration"/>
    <property type="evidence" value="ECO:0007669"/>
    <property type="project" value="TreeGrafter"/>
</dbReference>
<dbReference type="GO" id="GO:0090026">
    <property type="term" value="P:positive regulation of monocyte chemotaxis"/>
    <property type="evidence" value="ECO:0007669"/>
    <property type="project" value="Ensembl"/>
</dbReference>
<dbReference type="GO" id="GO:0050769">
    <property type="term" value="P:positive regulation of neurogenesis"/>
    <property type="evidence" value="ECO:0007669"/>
    <property type="project" value="Ensembl"/>
</dbReference>
<dbReference type="GO" id="GO:0045428">
    <property type="term" value="P:regulation of nitric oxide biosynthetic process"/>
    <property type="evidence" value="ECO:0007669"/>
    <property type="project" value="Ensembl"/>
</dbReference>
<dbReference type="GO" id="GO:0032680">
    <property type="term" value="P:regulation of tumor necrosis factor production"/>
    <property type="evidence" value="ECO:0007669"/>
    <property type="project" value="Ensembl"/>
</dbReference>
<dbReference type="GO" id="GO:0035176">
    <property type="term" value="P:social behavior"/>
    <property type="evidence" value="ECO:0007669"/>
    <property type="project" value="Ensembl"/>
</dbReference>
<dbReference type="GO" id="GO:0060074">
    <property type="term" value="P:synapse maturation"/>
    <property type="evidence" value="ECO:0007669"/>
    <property type="project" value="Ensembl"/>
</dbReference>
<dbReference type="GO" id="GO:0098883">
    <property type="term" value="P:synapse pruning"/>
    <property type="evidence" value="ECO:0000250"/>
    <property type="project" value="UniProtKB"/>
</dbReference>
<dbReference type="CDD" id="cd15186">
    <property type="entry name" value="7tmA_CX3CR1"/>
    <property type="match status" value="1"/>
</dbReference>
<dbReference type="FunFam" id="1.20.1070.10:FF:000026">
    <property type="entry name" value="C-C chemokine receptor type 5"/>
    <property type="match status" value="1"/>
</dbReference>
<dbReference type="Gene3D" id="1.20.1070.10">
    <property type="entry name" value="Rhodopsin 7-helix transmembrane proteins"/>
    <property type="match status" value="1"/>
</dbReference>
<dbReference type="InterPro" id="IPR050119">
    <property type="entry name" value="CCR1-9-like"/>
</dbReference>
<dbReference type="InterPro" id="IPR005387">
    <property type="entry name" value="Chemokine_CX3CR1"/>
</dbReference>
<dbReference type="InterPro" id="IPR000276">
    <property type="entry name" value="GPCR_Rhodpsn"/>
</dbReference>
<dbReference type="InterPro" id="IPR017452">
    <property type="entry name" value="GPCR_Rhodpsn_7TM"/>
</dbReference>
<dbReference type="PANTHER" id="PTHR10489">
    <property type="entry name" value="CELL ADHESION MOLECULE"/>
    <property type="match status" value="1"/>
</dbReference>
<dbReference type="PANTHER" id="PTHR10489:SF955">
    <property type="entry name" value="CX3C CHEMOKINE RECEPTOR 1"/>
    <property type="match status" value="1"/>
</dbReference>
<dbReference type="Pfam" id="PF00001">
    <property type="entry name" value="7tm_1"/>
    <property type="match status" value="1"/>
</dbReference>
<dbReference type="PRINTS" id="PR01562">
    <property type="entry name" value="FRACTALKINER"/>
</dbReference>
<dbReference type="PRINTS" id="PR00237">
    <property type="entry name" value="GPCRRHODOPSN"/>
</dbReference>
<dbReference type="SUPFAM" id="SSF81321">
    <property type="entry name" value="Family A G protein-coupled receptor-like"/>
    <property type="match status" value="1"/>
</dbReference>
<dbReference type="PROSITE" id="PS00237">
    <property type="entry name" value="G_PROTEIN_RECEP_F1_1"/>
    <property type="match status" value="1"/>
</dbReference>
<dbReference type="PROSITE" id="PS50262">
    <property type="entry name" value="G_PROTEIN_RECEP_F1_2"/>
    <property type="match status" value="1"/>
</dbReference>
<organism>
    <name type="scientific">Oryctolagus cuniculus</name>
    <name type="common">Rabbit</name>
    <dbReference type="NCBI Taxonomy" id="9986"/>
    <lineage>
        <taxon>Eukaryota</taxon>
        <taxon>Metazoa</taxon>
        <taxon>Chordata</taxon>
        <taxon>Craniata</taxon>
        <taxon>Vertebrata</taxon>
        <taxon>Euteleostomi</taxon>
        <taxon>Mammalia</taxon>
        <taxon>Eutheria</taxon>
        <taxon>Euarchontoglires</taxon>
        <taxon>Glires</taxon>
        <taxon>Lagomorpha</taxon>
        <taxon>Leporidae</taxon>
        <taxon>Oryctolagus</taxon>
    </lineage>
</organism>
<name>CX3C1_RABIT</name>